<evidence type="ECO:0000250" key="1"/>
<evidence type="ECO:0000250" key="2">
    <source>
        <dbReference type="UniProtKB" id="P32253"/>
    </source>
</evidence>
<evidence type="ECO:0000305" key="3"/>
<reference key="1">
    <citation type="journal article" date="2005" name="Nature">
        <title>The genome of the social amoeba Dictyostelium discoideum.</title>
        <authorList>
            <person name="Eichinger L."/>
            <person name="Pachebat J.A."/>
            <person name="Gloeckner G."/>
            <person name="Rajandream M.A."/>
            <person name="Sucgang R."/>
            <person name="Berriman M."/>
            <person name="Song J."/>
            <person name="Olsen R."/>
            <person name="Szafranski K."/>
            <person name="Xu Q."/>
            <person name="Tunggal B."/>
            <person name="Kummerfeld S."/>
            <person name="Madera M."/>
            <person name="Konfortov B.A."/>
            <person name="Rivero F."/>
            <person name="Bankier A.T."/>
            <person name="Lehmann R."/>
            <person name="Hamlin N."/>
            <person name="Davies R."/>
            <person name="Gaudet P."/>
            <person name="Fey P."/>
            <person name="Pilcher K."/>
            <person name="Chen G."/>
            <person name="Saunders D."/>
            <person name="Sodergren E.J."/>
            <person name="Davis P."/>
            <person name="Kerhornou A."/>
            <person name="Nie X."/>
            <person name="Hall N."/>
            <person name="Anjard C."/>
            <person name="Hemphill L."/>
            <person name="Bason N."/>
            <person name="Farbrother P."/>
            <person name="Desany B."/>
            <person name="Just E."/>
            <person name="Morio T."/>
            <person name="Rost R."/>
            <person name="Churcher C.M."/>
            <person name="Cooper J."/>
            <person name="Haydock S."/>
            <person name="van Driessche N."/>
            <person name="Cronin A."/>
            <person name="Goodhead I."/>
            <person name="Muzny D.M."/>
            <person name="Mourier T."/>
            <person name="Pain A."/>
            <person name="Lu M."/>
            <person name="Harper D."/>
            <person name="Lindsay R."/>
            <person name="Hauser H."/>
            <person name="James K.D."/>
            <person name="Quiles M."/>
            <person name="Madan Babu M."/>
            <person name="Saito T."/>
            <person name="Buchrieser C."/>
            <person name="Wardroper A."/>
            <person name="Felder M."/>
            <person name="Thangavelu M."/>
            <person name="Johnson D."/>
            <person name="Knights A."/>
            <person name="Loulseged H."/>
            <person name="Mungall K.L."/>
            <person name="Oliver K."/>
            <person name="Price C."/>
            <person name="Quail M.A."/>
            <person name="Urushihara H."/>
            <person name="Hernandez J."/>
            <person name="Rabbinowitsch E."/>
            <person name="Steffen D."/>
            <person name="Sanders M."/>
            <person name="Ma J."/>
            <person name="Kohara Y."/>
            <person name="Sharp S."/>
            <person name="Simmonds M.N."/>
            <person name="Spiegler S."/>
            <person name="Tivey A."/>
            <person name="Sugano S."/>
            <person name="White B."/>
            <person name="Walker D."/>
            <person name="Woodward J.R."/>
            <person name="Winckler T."/>
            <person name="Tanaka Y."/>
            <person name="Shaulsky G."/>
            <person name="Schleicher M."/>
            <person name="Weinstock G.M."/>
            <person name="Rosenthal A."/>
            <person name="Cox E.C."/>
            <person name="Chisholm R.L."/>
            <person name="Gibbs R.A."/>
            <person name="Loomis W.F."/>
            <person name="Platzer M."/>
            <person name="Kay R.R."/>
            <person name="Williams J.G."/>
            <person name="Dear P.H."/>
            <person name="Noegel A.A."/>
            <person name="Barrell B.G."/>
            <person name="Kuspa A."/>
        </authorList>
    </citation>
    <scope>NUCLEOTIDE SEQUENCE [LARGE SCALE GENOMIC DNA]</scope>
    <source>
        <strain>AX4</strain>
    </source>
</reference>
<gene>
    <name type="primary">rasU</name>
    <name type="ORF">DDB_G0270138</name>
</gene>
<name>RASU_DICDI</name>
<feature type="chain" id="PRO_0000365561" description="Ras-like protein rasU">
    <location>
        <begin position="1"/>
        <end position="210"/>
    </location>
</feature>
<feature type="propeptide" id="PRO_0000365562" description="Removed in mature form" evidence="1">
    <location>
        <begin position="211"/>
        <end position="213"/>
    </location>
</feature>
<feature type="short sequence motif" description="Effector region">
    <location>
        <begin position="43"/>
        <end position="51"/>
    </location>
</feature>
<feature type="binding site" evidence="1">
    <location>
        <begin position="21"/>
        <end position="28"/>
    </location>
    <ligand>
        <name>GTP</name>
        <dbReference type="ChEBI" id="CHEBI:37565"/>
    </ligand>
</feature>
<feature type="binding site" evidence="1">
    <location>
        <begin position="68"/>
        <end position="72"/>
    </location>
    <ligand>
        <name>GTP</name>
        <dbReference type="ChEBI" id="CHEBI:37565"/>
    </ligand>
</feature>
<feature type="binding site" evidence="1">
    <location>
        <begin position="126"/>
        <end position="129"/>
    </location>
    <ligand>
        <name>GTP</name>
        <dbReference type="ChEBI" id="CHEBI:37565"/>
    </ligand>
</feature>
<feature type="modified residue" description="Cysteine methyl ester" evidence="1">
    <location>
        <position position="210"/>
    </location>
</feature>
<feature type="lipid moiety-binding region" description="S-geranylgeranyl cysteine" evidence="1">
    <location>
        <position position="210"/>
    </location>
</feature>
<protein>
    <recommendedName>
        <fullName>Ras-like protein rasU</fullName>
        <ecNumber evidence="2">3.6.5.2</ecNumber>
    </recommendedName>
</protein>
<keyword id="KW-1003">Cell membrane</keyword>
<keyword id="KW-0342">GTP-binding</keyword>
<keyword id="KW-0378">Hydrolase</keyword>
<keyword id="KW-0449">Lipoprotein</keyword>
<keyword id="KW-0472">Membrane</keyword>
<keyword id="KW-0488">Methylation</keyword>
<keyword id="KW-0547">Nucleotide-binding</keyword>
<keyword id="KW-0636">Prenylation</keyword>
<keyword id="KW-1185">Reference proteome</keyword>
<accession>Q55CB0</accession>
<dbReference type="EC" id="3.6.5.2" evidence="2"/>
<dbReference type="EMBL" id="AAFI02000005">
    <property type="protein sequence ID" value="EAL72419.1"/>
    <property type="molecule type" value="Genomic_DNA"/>
</dbReference>
<dbReference type="RefSeq" id="XP_646571.1">
    <property type="nucleotide sequence ID" value="XM_641479.1"/>
</dbReference>
<dbReference type="SMR" id="Q55CB0"/>
<dbReference type="FunCoup" id="Q55CB0">
    <property type="interactions" value="3"/>
</dbReference>
<dbReference type="STRING" id="44689.Q55CB0"/>
<dbReference type="PaxDb" id="44689-DDB0229438"/>
<dbReference type="EnsemblProtists" id="EAL72419">
    <property type="protein sequence ID" value="EAL72419"/>
    <property type="gene ID" value="DDB_G0270138"/>
</dbReference>
<dbReference type="GeneID" id="8617540"/>
<dbReference type="KEGG" id="ddi:DDB_G0270138"/>
<dbReference type="dictyBase" id="DDB_G0270138">
    <property type="gene designation" value="rasU"/>
</dbReference>
<dbReference type="VEuPathDB" id="AmoebaDB:DDB_G0270138"/>
<dbReference type="eggNOG" id="KOG0395">
    <property type="taxonomic scope" value="Eukaryota"/>
</dbReference>
<dbReference type="HOGENOM" id="CLU_041217_9_8_1"/>
<dbReference type="InParanoid" id="Q55CB0"/>
<dbReference type="OMA" id="NKRGCHC"/>
<dbReference type="PhylomeDB" id="Q55CB0"/>
<dbReference type="PRO" id="PR:Q55CB0"/>
<dbReference type="Proteomes" id="UP000002195">
    <property type="component" value="Chromosome 1"/>
</dbReference>
<dbReference type="GO" id="GO:0005886">
    <property type="term" value="C:plasma membrane"/>
    <property type="evidence" value="ECO:0000318"/>
    <property type="project" value="GO_Central"/>
</dbReference>
<dbReference type="GO" id="GO:0003925">
    <property type="term" value="F:G protein activity"/>
    <property type="evidence" value="ECO:0007669"/>
    <property type="project" value="UniProtKB-EC"/>
</dbReference>
<dbReference type="GO" id="GO:0019003">
    <property type="term" value="F:GDP binding"/>
    <property type="evidence" value="ECO:0000318"/>
    <property type="project" value="GO_Central"/>
</dbReference>
<dbReference type="GO" id="GO:0005525">
    <property type="term" value="F:GTP binding"/>
    <property type="evidence" value="ECO:0000318"/>
    <property type="project" value="GO_Central"/>
</dbReference>
<dbReference type="GO" id="GO:0003924">
    <property type="term" value="F:GTPase activity"/>
    <property type="evidence" value="ECO:0000318"/>
    <property type="project" value="GO_Central"/>
</dbReference>
<dbReference type="GO" id="GO:0007165">
    <property type="term" value="P:signal transduction"/>
    <property type="evidence" value="ECO:0007669"/>
    <property type="project" value="InterPro"/>
</dbReference>
<dbReference type="CDD" id="cd00876">
    <property type="entry name" value="Ras"/>
    <property type="match status" value="1"/>
</dbReference>
<dbReference type="FunFam" id="3.40.50.300:FF:000080">
    <property type="entry name" value="Ras-like GTPase Ras1"/>
    <property type="match status" value="1"/>
</dbReference>
<dbReference type="Gene3D" id="3.40.50.300">
    <property type="entry name" value="P-loop containing nucleotide triphosphate hydrolases"/>
    <property type="match status" value="1"/>
</dbReference>
<dbReference type="InterPro" id="IPR027417">
    <property type="entry name" value="P-loop_NTPase"/>
</dbReference>
<dbReference type="InterPro" id="IPR005225">
    <property type="entry name" value="Small_GTP-bd"/>
</dbReference>
<dbReference type="InterPro" id="IPR001806">
    <property type="entry name" value="Small_GTPase"/>
</dbReference>
<dbReference type="InterPro" id="IPR020849">
    <property type="entry name" value="Small_GTPase_Ras-type"/>
</dbReference>
<dbReference type="NCBIfam" id="TIGR00231">
    <property type="entry name" value="small_GTP"/>
    <property type="match status" value="1"/>
</dbReference>
<dbReference type="PANTHER" id="PTHR24070">
    <property type="entry name" value="RAS, DI-RAS, AND RHEB FAMILY MEMBERS OF SMALL GTPASE SUPERFAMILY"/>
    <property type="match status" value="1"/>
</dbReference>
<dbReference type="Pfam" id="PF00071">
    <property type="entry name" value="Ras"/>
    <property type="match status" value="1"/>
</dbReference>
<dbReference type="PRINTS" id="PR00449">
    <property type="entry name" value="RASTRNSFRMNG"/>
</dbReference>
<dbReference type="SMART" id="SM00175">
    <property type="entry name" value="RAB"/>
    <property type="match status" value="1"/>
</dbReference>
<dbReference type="SMART" id="SM00173">
    <property type="entry name" value="RAS"/>
    <property type="match status" value="1"/>
</dbReference>
<dbReference type="SMART" id="SM00174">
    <property type="entry name" value="RHO"/>
    <property type="match status" value="1"/>
</dbReference>
<dbReference type="SUPFAM" id="SSF52540">
    <property type="entry name" value="P-loop containing nucleoside triphosphate hydrolases"/>
    <property type="match status" value="1"/>
</dbReference>
<dbReference type="PROSITE" id="PS51421">
    <property type="entry name" value="RAS"/>
    <property type="match status" value="1"/>
</dbReference>
<sequence length="213" mass="24780">MSAFIYNNSNNNNSMRLCVMGDGGVGKTSITIQFISNHFVNCYDPTIEDLYRKQCLIDDQVYMLDILDTAGQDELNAIRNHWIKSCEGFILVYSVTSRSSFDQIQSFLDQIKFLKSEKVPIIMIANKSDLDDERQVTYQEGENFANRFGMSFMEVSAKYKLNIDEVFNQIAQHCVKRRCDHIYINKSIRNKNSIFKKFNQKLNNTFHSICKMI</sequence>
<organism>
    <name type="scientific">Dictyostelium discoideum</name>
    <name type="common">Social amoeba</name>
    <dbReference type="NCBI Taxonomy" id="44689"/>
    <lineage>
        <taxon>Eukaryota</taxon>
        <taxon>Amoebozoa</taxon>
        <taxon>Evosea</taxon>
        <taxon>Eumycetozoa</taxon>
        <taxon>Dictyostelia</taxon>
        <taxon>Dictyosteliales</taxon>
        <taxon>Dictyosteliaceae</taxon>
        <taxon>Dictyostelium</taxon>
    </lineage>
</organism>
<proteinExistence type="inferred from homology"/>
<comment type="function">
    <text evidence="2">Ras proteins bind GDP/GTP and possess intrinsic GTPase activity.</text>
</comment>
<comment type="catalytic activity">
    <reaction evidence="2">
        <text>GTP + H2O = GDP + phosphate + H(+)</text>
        <dbReference type="Rhea" id="RHEA:19669"/>
        <dbReference type="ChEBI" id="CHEBI:15377"/>
        <dbReference type="ChEBI" id="CHEBI:15378"/>
        <dbReference type="ChEBI" id="CHEBI:37565"/>
        <dbReference type="ChEBI" id="CHEBI:43474"/>
        <dbReference type="ChEBI" id="CHEBI:58189"/>
        <dbReference type="EC" id="3.6.5.2"/>
    </reaction>
</comment>
<comment type="subcellular location">
    <subcellularLocation>
        <location evidence="3">Cell membrane</location>
        <topology evidence="3">Lipid-anchor</topology>
        <orientation evidence="3">Cytoplasmic side</orientation>
    </subcellularLocation>
</comment>
<comment type="similarity">
    <text evidence="3">Belongs to the small GTPase superfamily. Ras family.</text>
</comment>